<sequence length="312" mass="33654">MARTDDDNWDLTSSVGVTATIVAVGRALATKDPRGLINDPFAEPLVRAVGLDLFTKMMDGELDMSTIADVSPAVAQAMVYGNAVRTKYFDDYLLNATAGGIRQVAILASGLDSRAYRLPWPTRTVVYEIDQPKVMEFKTTTLADLGAEPSAIRRAVPIDLRADWPTALQAAGFDSAAPTAWLAEGLLIYLKPQTQDRLFDNITALSAPGSMVATEFVTGIADFSAERARTISNPFRCHGVDVDLASLVYTGPRNHVLDYLAAKGWQPEGVSLAELFRRSGLDVRAADDDTIFISGCLTDHSSISPPTAAGWR</sequence>
<keyword id="KW-0489">Methyltransferase</keyword>
<keyword id="KW-1185">Reference proteome</keyword>
<keyword id="KW-0949">S-adenosyl-L-methionine</keyword>
<keyword id="KW-0808">Transferase</keyword>
<accession>A5U388</accession>
<evidence type="ECO:0000250" key="1"/>
<evidence type="ECO:0000305" key="2"/>
<name>Y1739_MYCTA</name>
<comment type="function">
    <text evidence="1">Exhibits S-adenosyl-L-methionine-dependent methyltransferase activity.</text>
</comment>
<comment type="similarity">
    <text evidence="2">Belongs to the UPF0677 family.</text>
</comment>
<organism>
    <name type="scientific">Mycobacterium tuberculosis (strain ATCC 25177 / H37Ra)</name>
    <dbReference type="NCBI Taxonomy" id="419947"/>
    <lineage>
        <taxon>Bacteria</taxon>
        <taxon>Bacillati</taxon>
        <taxon>Actinomycetota</taxon>
        <taxon>Actinomycetes</taxon>
        <taxon>Mycobacteriales</taxon>
        <taxon>Mycobacteriaceae</taxon>
        <taxon>Mycobacterium</taxon>
        <taxon>Mycobacterium tuberculosis complex</taxon>
    </lineage>
</organism>
<protein>
    <recommendedName>
        <fullName>Putative S-adenosyl-L-methionine-dependent methyltransferase MRA_1739</fullName>
        <ecNumber>2.1.1.-</ecNumber>
    </recommendedName>
</protein>
<dbReference type="EC" id="2.1.1.-"/>
<dbReference type="EMBL" id="CP000611">
    <property type="protein sequence ID" value="ABQ73488.1"/>
    <property type="molecule type" value="Genomic_DNA"/>
</dbReference>
<dbReference type="RefSeq" id="WP_003408497.1">
    <property type="nucleotide sequence ID" value="NZ_CP016972.1"/>
</dbReference>
<dbReference type="SMR" id="A5U388"/>
<dbReference type="KEGG" id="mra:MRA_1739"/>
<dbReference type="eggNOG" id="COG3315">
    <property type="taxonomic scope" value="Bacteria"/>
</dbReference>
<dbReference type="HOGENOM" id="CLU_056160_2_1_11"/>
<dbReference type="Proteomes" id="UP000001988">
    <property type="component" value="Chromosome"/>
</dbReference>
<dbReference type="GO" id="GO:0008168">
    <property type="term" value="F:methyltransferase activity"/>
    <property type="evidence" value="ECO:0007669"/>
    <property type="project" value="UniProtKB-KW"/>
</dbReference>
<dbReference type="GO" id="GO:0032259">
    <property type="term" value="P:methylation"/>
    <property type="evidence" value="ECO:0007669"/>
    <property type="project" value="UniProtKB-KW"/>
</dbReference>
<dbReference type="FunFam" id="3.40.50.150:FF:000152">
    <property type="entry name" value="S-adenosyl-L-methionine-dependent methyltransferase"/>
    <property type="match status" value="1"/>
</dbReference>
<dbReference type="Gene3D" id="3.40.50.150">
    <property type="entry name" value="Vaccinia Virus protein VP39"/>
    <property type="match status" value="1"/>
</dbReference>
<dbReference type="InterPro" id="IPR007213">
    <property type="entry name" value="Ppm1/Ppm2/Tcmp"/>
</dbReference>
<dbReference type="InterPro" id="IPR029063">
    <property type="entry name" value="SAM-dependent_MTases_sf"/>
</dbReference>
<dbReference type="InterPro" id="IPR011610">
    <property type="entry name" value="SAM_mthyl_Trfase_ML2640-like"/>
</dbReference>
<dbReference type="NCBIfam" id="TIGR00027">
    <property type="entry name" value="mthyl_TIGR00027"/>
    <property type="match status" value="1"/>
</dbReference>
<dbReference type="PANTHER" id="PTHR43619">
    <property type="entry name" value="S-ADENOSYL-L-METHIONINE-DEPENDENT METHYLTRANSFERASE YKTD-RELATED"/>
    <property type="match status" value="1"/>
</dbReference>
<dbReference type="PANTHER" id="PTHR43619:SF2">
    <property type="entry name" value="S-ADENOSYL-L-METHIONINE-DEPENDENT METHYLTRANSFERASES SUPERFAMILY PROTEIN"/>
    <property type="match status" value="1"/>
</dbReference>
<dbReference type="Pfam" id="PF04072">
    <property type="entry name" value="LCM"/>
    <property type="match status" value="1"/>
</dbReference>
<dbReference type="SUPFAM" id="SSF53335">
    <property type="entry name" value="S-adenosyl-L-methionine-dependent methyltransferases"/>
    <property type="match status" value="1"/>
</dbReference>
<gene>
    <name type="ordered locus">MRA_1739</name>
</gene>
<feature type="chain" id="PRO_0000361224" description="Putative S-adenosyl-L-methionine-dependent methyltransferase MRA_1739">
    <location>
        <begin position="1"/>
        <end position="312"/>
    </location>
</feature>
<feature type="binding site" evidence="1">
    <location>
        <position position="130"/>
    </location>
    <ligand>
        <name>S-adenosyl-L-methionine</name>
        <dbReference type="ChEBI" id="CHEBI:59789"/>
    </ligand>
</feature>
<feature type="binding site" evidence="1">
    <location>
        <begin position="159"/>
        <end position="160"/>
    </location>
    <ligand>
        <name>S-adenosyl-L-methionine</name>
        <dbReference type="ChEBI" id="CHEBI:59789"/>
    </ligand>
</feature>
<proteinExistence type="inferred from homology"/>
<reference key="1">
    <citation type="journal article" date="2008" name="PLoS ONE">
        <title>Genetic basis of virulence attenuation revealed by comparative genomic analysis of Mycobacterium tuberculosis strain H37Ra versus H37Rv.</title>
        <authorList>
            <person name="Zheng H."/>
            <person name="Lu L."/>
            <person name="Wang B."/>
            <person name="Pu S."/>
            <person name="Zhang X."/>
            <person name="Zhu G."/>
            <person name="Shi W."/>
            <person name="Zhang L."/>
            <person name="Wang H."/>
            <person name="Wang S."/>
            <person name="Zhao G."/>
            <person name="Zhang Y."/>
        </authorList>
    </citation>
    <scope>NUCLEOTIDE SEQUENCE [LARGE SCALE GENOMIC DNA]</scope>
    <source>
        <strain>ATCC 25177 / H37Ra</strain>
    </source>
</reference>